<organism>
    <name type="scientific">Bos taurus</name>
    <name type="common">Bovine</name>
    <dbReference type="NCBI Taxonomy" id="9913"/>
    <lineage>
        <taxon>Eukaryota</taxon>
        <taxon>Metazoa</taxon>
        <taxon>Chordata</taxon>
        <taxon>Craniata</taxon>
        <taxon>Vertebrata</taxon>
        <taxon>Euteleostomi</taxon>
        <taxon>Mammalia</taxon>
        <taxon>Eutheria</taxon>
        <taxon>Laurasiatheria</taxon>
        <taxon>Artiodactyla</taxon>
        <taxon>Ruminantia</taxon>
        <taxon>Pecora</taxon>
        <taxon>Bovidae</taxon>
        <taxon>Bovinae</taxon>
        <taxon>Bos</taxon>
    </lineage>
</organism>
<comment type="function">
    <text evidence="1">Component of the small ribosomal subunit. The ribosome is a large ribonucleoprotein complex responsible for the synthesis of proteins in the cell. Part of the small subunit (SSU) processome, first precursor of the small eukaryotic ribosomal subunit. During the assembly of the SSU processome in the nucleolus, many ribosome biogenesis factors, an RNA chaperone and ribosomal proteins associate with the nascent pre-rRNA and work in concert to generate RNA folding, modifications, rearrangements and cleavage as well as targeted degradation of pre-ribosomal RNA by the RNA exosome.</text>
</comment>
<comment type="subunit">
    <text evidence="1">Component of the small ribosomal subunit. Identified in a IGF2BP1-dependent mRNP granule complex containing untranslated mRNAs. Part of the small subunit (SSU) processome, composed of more than 70 proteins and the RNA chaperone small nucleolar RNA (snoRNA) U3.</text>
</comment>
<comment type="subcellular location">
    <subcellularLocation>
        <location evidence="1">Cytoplasm</location>
    </subcellularLocation>
    <subcellularLocation>
        <location evidence="1">Membrane</location>
        <topology evidence="1">Lipid-anchor</topology>
    </subcellularLocation>
    <subcellularLocation>
        <location evidence="1">Nucleus</location>
        <location evidence="1">Nucleolus</location>
    </subcellularLocation>
    <text evidence="1">Localized in cytoplasmic mRNP granules containing untranslated mRNAs.</text>
</comment>
<comment type="similarity">
    <text evidence="4">Belongs to the eukaryotic ribosomal protein eS8 family.</text>
</comment>
<accession>Q5E958</accession>
<accession>A1A4S0</accession>
<gene>
    <name type="primary">RPS8</name>
</gene>
<name>RS8_BOVIN</name>
<dbReference type="EMBL" id="BT021062">
    <property type="protein sequence ID" value="AAX09079.1"/>
    <property type="molecule type" value="mRNA"/>
</dbReference>
<dbReference type="EMBL" id="AY911334">
    <property type="protein sequence ID" value="AAW82102.1"/>
    <property type="molecule type" value="mRNA"/>
</dbReference>
<dbReference type="EMBL" id="BC102608">
    <property type="protein sequence ID" value="AAI02609.1"/>
    <property type="molecule type" value="mRNA"/>
</dbReference>
<dbReference type="EMBL" id="BC126849">
    <property type="protein sequence ID" value="AAI26850.1"/>
    <property type="molecule type" value="mRNA"/>
</dbReference>
<dbReference type="RefSeq" id="NP_001020488.1">
    <property type="nucleotide sequence ID" value="NM_001025317.1"/>
</dbReference>
<dbReference type="PDB" id="6MTD">
    <property type="method" value="EM"/>
    <property type="resolution" value="3.30 A"/>
    <property type="chains" value="II=2-207"/>
</dbReference>
<dbReference type="PDB" id="6MTE">
    <property type="method" value="EM"/>
    <property type="resolution" value="3.40 A"/>
    <property type="chains" value="II=2-207"/>
</dbReference>
<dbReference type="PDB" id="7ZJW">
    <property type="method" value="EM"/>
    <property type="resolution" value="2.80 A"/>
    <property type="chains" value="ST=1-208"/>
</dbReference>
<dbReference type="PDB" id="7ZJX">
    <property type="method" value="EM"/>
    <property type="resolution" value="3.10 A"/>
    <property type="chains" value="ST=1-208"/>
</dbReference>
<dbReference type="PDBsum" id="6MTD"/>
<dbReference type="PDBsum" id="6MTE"/>
<dbReference type="PDBsum" id="7ZJW"/>
<dbReference type="PDBsum" id="7ZJX"/>
<dbReference type="EMDB" id="EMD-14751"/>
<dbReference type="EMDB" id="EMD-14752"/>
<dbReference type="EMDB" id="EMD-9240"/>
<dbReference type="EMDB" id="EMD-9242"/>
<dbReference type="SMR" id="Q5E958"/>
<dbReference type="FunCoup" id="Q5E958">
    <property type="interactions" value="2376"/>
</dbReference>
<dbReference type="STRING" id="9913.ENSBTAP00000058760"/>
<dbReference type="PaxDb" id="9913-ENSBTAP00000020326"/>
<dbReference type="PeptideAtlas" id="Q5E958"/>
<dbReference type="GeneID" id="404140"/>
<dbReference type="KEGG" id="bta:404140"/>
<dbReference type="CTD" id="6202"/>
<dbReference type="VEuPathDB" id="HostDB:ENSBTAG00000015285"/>
<dbReference type="eggNOG" id="KOG3283">
    <property type="taxonomic scope" value="Eukaryota"/>
</dbReference>
<dbReference type="HOGENOM" id="CLU_080597_1_1_1"/>
<dbReference type="InParanoid" id="Q5E958"/>
<dbReference type="OMA" id="QRPHYRK"/>
<dbReference type="OrthoDB" id="1703270at2759"/>
<dbReference type="Reactome" id="R-BTA-156827">
    <property type="pathway name" value="L13a-mediated translational silencing of Ceruloplasmin expression"/>
</dbReference>
<dbReference type="Reactome" id="R-BTA-1799339">
    <property type="pathway name" value="SRP-dependent cotranslational protein targeting to membrane"/>
</dbReference>
<dbReference type="Reactome" id="R-BTA-6791226">
    <property type="pathway name" value="Major pathway of rRNA processing in the nucleolus and cytosol"/>
</dbReference>
<dbReference type="Reactome" id="R-BTA-72649">
    <property type="pathway name" value="Translation initiation complex formation"/>
</dbReference>
<dbReference type="Reactome" id="R-BTA-72689">
    <property type="pathway name" value="Formation of a pool of free 40S subunits"/>
</dbReference>
<dbReference type="Reactome" id="R-BTA-72695">
    <property type="pathway name" value="Formation of the ternary complex, and subsequently, the 43S complex"/>
</dbReference>
<dbReference type="Reactome" id="R-BTA-72702">
    <property type="pathway name" value="Ribosomal scanning and start codon recognition"/>
</dbReference>
<dbReference type="Reactome" id="R-BTA-72706">
    <property type="pathway name" value="GTP hydrolysis and joining of the 60S ribosomal subunit"/>
</dbReference>
<dbReference type="Reactome" id="R-BTA-975956">
    <property type="pathway name" value="Nonsense Mediated Decay (NMD) independent of the Exon Junction Complex (EJC)"/>
</dbReference>
<dbReference type="Reactome" id="R-BTA-975957">
    <property type="pathway name" value="Nonsense Mediated Decay (NMD) enhanced by the Exon Junction Complex (EJC)"/>
</dbReference>
<dbReference type="CD-CODE" id="D7FE2080">
    <property type="entry name" value="Nucleolus"/>
</dbReference>
<dbReference type="Proteomes" id="UP000009136">
    <property type="component" value="Chromosome 3"/>
</dbReference>
<dbReference type="Bgee" id="ENSBTAG00000015285">
    <property type="expression patterns" value="Expressed in myometrium and 104 other cell types or tissues"/>
</dbReference>
<dbReference type="GO" id="GO:0022627">
    <property type="term" value="C:cytosolic small ribosomal subunit"/>
    <property type="evidence" value="ECO:0000318"/>
    <property type="project" value="GO_Central"/>
</dbReference>
<dbReference type="GO" id="GO:0016020">
    <property type="term" value="C:membrane"/>
    <property type="evidence" value="ECO:0007669"/>
    <property type="project" value="UniProtKB-SubCell"/>
</dbReference>
<dbReference type="GO" id="GO:0005730">
    <property type="term" value="C:nucleolus"/>
    <property type="evidence" value="ECO:0007669"/>
    <property type="project" value="UniProtKB-SubCell"/>
</dbReference>
<dbReference type="GO" id="GO:1990904">
    <property type="term" value="C:ribonucleoprotein complex"/>
    <property type="evidence" value="ECO:0000250"/>
    <property type="project" value="UniProtKB"/>
</dbReference>
<dbReference type="GO" id="GO:0032040">
    <property type="term" value="C:small-subunit processome"/>
    <property type="evidence" value="ECO:0000250"/>
    <property type="project" value="UniProtKB"/>
</dbReference>
<dbReference type="GO" id="GO:0003735">
    <property type="term" value="F:structural constituent of ribosome"/>
    <property type="evidence" value="ECO:0000318"/>
    <property type="project" value="GO_Central"/>
</dbReference>
<dbReference type="GO" id="GO:0000462">
    <property type="term" value="P:maturation of SSU-rRNA from tricistronic rRNA transcript (SSU-rRNA, 5.8S rRNA, LSU-rRNA)"/>
    <property type="evidence" value="ECO:0000318"/>
    <property type="project" value="GO_Central"/>
</dbReference>
<dbReference type="GO" id="GO:0042274">
    <property type="term" value="P:ribosomal small subunit biogenesis"/>
    <property type="evidence" value="ECO:0000250"/>
    <property type="project" value="UniProtKB"/>
</dbReference>
<dbReference type="GO" id="GO:0006412">
    <property type="term" value="P:translation"/>
    <property type="evidence" value="ECO:0007669"/>
    <property type="project" value="InterPro"/>
</dbReference>
<dbReference type="CDD" id="cd11380">
    <property type="entry name" value="Ribosomal_S8e_like"/>
    <property type="match status" value="1"/>
</dbReference>
<dbReference type="FunFam" id="1.10.168.20:FF:000001">
    <property type="entry name" value="40S ribosomal protein S8"/>
    <property type="match status" value="1"/>
</dbReference>
<dbReference type="FunFam" id="3.10.290.70:FF:000004">
    <property type="entry name" value="40S ribosomal protein S8"/>
    <property type="match status" value="1"/>
</dbReference>
<dbReference type="FunFam" id="3.10.290.70:FF:000005">
    <property type="entry name" value="40S ribosomal protein S8"/>
    <property type="match status" value="1"/>
</dbReference>
<dbReference type="Gene3D" id="3.10.290.70">
    <property type="match status" value="1"/>
</dbReference>
<dbReference type="Gene3D" id="1.10.168.20">
    <property type="entry name" value="Ribosomal protein S8e, subdomain"/>
    <property type="match status" value="1"/>
</dbReference>
<dbReference type="InterPro" id="IPR001047">
    <property type="entry name" value="Ribosomal_eS8"/>
</dbReference>
<dbReference type="InterPro" id="IPR018283">
    <property type="entry name" value="Ribosomal_eS8_CS"/>
</dbReference>
<dbReference type="InterPro" id="IPR042563">
    <property type="entry name" value="Ribosomal_protein_eS8_euk"/>
</dbReference>
<dbReference type="InterPro" id="IPR022309">
    <property type="entry name" value="Ribosomal_Se8/biogenesis_NSA2"/>
</dbReference>
<dbReference type="NCBIfam" id="TIGR00307">
    <property type="entry name" value="eS8"/>
    <property type="match status" value="1"/>
</dbReference>
<dbReference type="PANTHER" id="PTHR10394">
    <property type="entry name" value="40S RIBOSOMAL PROTEIN S8"/>
    <property type="match status" value="1"/>
</dbReference>
<dbReference type="Pfam" id="PF01201">
    <property type="entry name" value="Ribosomal_S8e"/>
    <property type="match status" value="1"/>
</dbReference>
<dbReference type="PROSITE" id="PS01193">
    <property type="entry name" value="RIBOSOMAL_S8E"/>
    <property type="match status" value="1"/>
</dbReference>
<keyword id="KW-0002">3D-structure</keyword>
<keyword id="KW-0007">Acetylation</keyword>
<keyword id="KW-0963">Cytoplasm</keyword>
<keyword id="KW-1017">Isopeptide bond</keyword>
<keyword id="KW-0449">Lipoprotein</keyword>
<keyword id="KW-0472">Membrane</keyword>
<keyword id="KW-0519">Myristate</keyword>
<keyword id="KW-0539">Nucleus</keyword>
<keyword id="KW-0597">Phosphoprotein</keyword>
<keyword id="KW-1185">Reference proteome</keyword>
<keyword id="KW-0687">Ribonucleoprotein</keyword>
<keyword id="KW-0689">Ribosomal protein</keyword>
<keyword id="KW-0832">Ubl conjugation</keyword>
<feature type="initiator methionine" description="Removed" evidence="1">
    <location>
        <position position="1"/>
    </location>
</feature>
<feature type="chain" id="PRO_0000231005" description="Small ribosomal subunit protein eS8">
    <location>
        <begin position="2"/>
        <end position="208"/>
    </location>
</feature>
<feature type="region of interest" description="Disordered" evidence="3">
    <location>
        <begin position="1"/>
        <end position="27"/>
    </location>
</feature>
<feature type="compositionally biased region" description="Basic residues" evidence="3">
    <location>
        <begin position="8"/>
        <end position="26"/>
    </location>
</feature>
<feature type="modified residue" description="N6-acetyllysine" evidence="2">
    <location>
        <position position="37"/>
    </location>
</feature>
<feature type="modified residue" description="N6-acetyllysine" evidence="2">
    <location>
        <position position="128"/>
    </location>
</feature>
<feature type="modified residue" description="Phosphothreonine" evidence="1">
    <location>
        <position position="130"/>
    </location>
</feature>
<feature type="modified residue" description="Phosphoserine" evidence="1">
    <location>
        <position position="160"/>
    </location>
</feature>
<feature type="lipid moiety-binding region" description="N-myristoyl glycine" evidence="1">
    <location>
        <position position="2"/>
    </location>
</feature>
<feature type="cross-link" description="Glycyl lysine isopeptide (Lys-Gly) (interchain with G-Cter in SUMO2)" evidence="1">
    <location>
        <position position="170"/>
    </location>
</feature>
<feature type="cross-link" description="Glycyl lysine isopeptide (Lys-Gly) (interchain with G-Cter in SUMO2)" evidence="1">
    <location>
        <position position="193"/>
    </location>
</feature>
<proteinExistence type="evidence at protein level"/>
<sequence>MGISRDNWHKRRKTGGKRKPYHKKRKYELGRPAANTKIGPRRIHTVRVRGGNKKYRALRLDVGNFSWGSECCTRKTRIIDVVYNASNNELVRTKTLVKNCIVLIDSTPYRQWYESHYALPLGRKKGAKLTPEEEEILNKKRSKKIQKKYDERKKNAKISSLLEEQFQQGKLLACIASRPGQCGRADGYVLEGKELEFYLRKIKARKGK</sequence>
<evidence type="ECO:0000250" key="1">
    <source>
        <dbReference type="UniProtKB" id="P62241"/>
    </source>
</evidence>
<evidence type="ECO:0000250" key="2">
    <source>
        <dbReference type="UniProtKB" id="P62242"/>
    </source>
</evidence>
<evidence type="ECO:0000256" key="3">
    <source>
        <dbReference type="SAM" id="MobiDB-lite"/>
    </source>
</evidence>
<evidence type="ECO:0000305" key="4"/>
<protein>
    <recommendedName>
        <fullName evidence="4">Small ribosomal subunit protein eS8</fullName>
    </recommendedName>
    <alternativeName>
        <fullName>40S ribosomal protein S8</fullName>
    </alternativeName>
</protein>
<reference key="1">
    <citation type="journal article" date="2005" name="BMC Genomics">
        <title>Characterization of 954 bovine full-CDS cDNA sequences.</title>
        <authorList>
            <person name="Harhay G.P."/>
            <person name="Sonstegard T.S."/>
            <person name="Keele J.W."/>
            <person name="Heaton M.P."/>
            <person name="Clawson M.L."/>
            <person name="Snelling W.M."/>
            <person name="Wiedmann R.T."/>
            <person name="Van Tassell C.P."/>
            <person name="Smith T.P.L."/>
        </authorList>
    </citation>
    <scope>NUCLEOTIDE SEQUENCE [LARGE SCALE MRNA]</scope>
</reference>
<reference key="2">
    <citation type="submission" date="2005-01" db="EMBL/GenBank/DDBJ databases">
        <title>Analysis of sequences obtained from constructed full-length bovine cDNA libraries.</title>
        <authorList>
            <person name="Yu J."/>
            <person name="Meng Y."/>
            <person name="Wang Z."/>
            <person name="Hansen C."/>
            <person name="Li C."/>
            <person name="Moore S.S."/>
        </authorList>
    </citation>
    <scope>NUCLEOTIDE SEQUENCE [LARGE SCALE MRNA]</scope>
    <source>
        <tissue>Lymphoid epithelium</tissue>
    </source>
</reference>
<reference key="3">
    <citation type="submission" date="2006-10" db="EMBL/GenBank/DDBJ databases">
        <authorList>
            <consortium name="NIH - Mammalian Gene Collection (MGC) project"/>
        </authorList>
    </citation>
    <scope>NUCLEOTIDE SEQUENCE [LARGE SCALE MRNA]</scope>
    <source>
        <strain>Crossbred X Angus</strain>
        <strain>Hereford</strain>
        <tissue>Liver</tissue>
        <tissue>Thymus</tissue>
    </source>
</reference>